<organism>
    <name type="scientific">Neisseria meningitidis serogroup C (strain 053442)</name>
    <dbReference type="NCBI Taxonomy" id="374833"/>
    <lineage>
        <taxon>Bacteria</taxon>
        <taxon>Pseudomonadati</taxon>
        <taxon>Pseudomonadota</taxon>
        <taxon>Betaproteobacteria</taxon>
        <taxon>Neisseriales</taxon>
        <taxon>Neisseriaceae</taxon>
        <taxon>Neisseria</taxon>
    </lineage>
</organism>
<dbReference type="EC" id="5.4.3.8" evidence="1"/>
<dbReference type="EMBL" id="CP000381">
    <property type="protein sequence ID" value="ABX72564.1"/>
    <property type="molecule type" value="Genomic_DNA"/>
</dbReference>
<dbReference type="RefSeq" id="WP_012221274.1">
    <property type="nucleotide sequence ID" value="NC_010120.1"/>
</dbReference>
<dbReference type="SMR" id="A9M1G6"/>
<dbReference type="KEGG" id="nmn:NMCC_0357"/>
<dbReference type="HOGENOM" id="CLU_016922_1_5_4"/>
<dbReference type="UniPathway" id="UPA00251">
    <property type="reaction ID" value="UER00317"/>
</dbReference>
<dbReference type="Proteomes" id="UP000001177">
    <property type="component" value="Chromosome"/>
</dbReference>
<dbReference type="GO" id="GO:0005737">
    <property type="term" value="C:cytoplasm"/>
    <property type="evidence" value="ECO:0007669"/>
    <property type="project" value="UniProtKB-SubCell"/>
</dbReference>
<dbReference type="GO" id="GO:0042286">
    <property type="term" value="F:glutamate-1-semialdehyde 2,1-aminomutase activity"/>
    <property type="evidence" value="ECO:0007669"/>
    <property type="project" value="UniProtKB-UniRule"/>
</dbReference>
<dbReference type="GO" id="GO:0030170">
    <property type="term" value="F:pyridoxal phosphate binding"/>
    <property type="evidence" value="ECO:0007669"/>
    <property type="project" value="InterPro"/>
</dbReference>
<dbReference type="GO" id="GO:0008483">
    <property type="term" value="F:transaminase activity"/>
    <property type="evidence" value="ECO:0007669"/>
    <property type="project" value="InterPro"/>
</dbReference>
<dbReference type="GO" id="GO:0006782">
    <property type="term" value="P:protoporphyrinogen IX biosynthetic process"/>
    <property type="evidence" value="ECO:0007669"/>
    <property type="project" value="UniProtKB-UniRule"/>
</dbReference>
<dbReference type="CDD" id="cd00610">
    <property type="entry name" value="OAT_like"/>
    <property type="match status" value="1"/>
</dbReference>
<dbReference type="FunFam" id="3.40.640.10:FF:000021">
    <property type="entry name" value="Glutamate-1-semialdehyde 2,1-aminomutase"/>
    <property type="match status" value="1"/>
</dbReference>
<dbReference type="Gene3D" id="3.90.1150.10">
    <property type="entry name" value="Aspartate Aminotransferase, domain 1"/>
    <property type="match status" value="1"/>
</dbReference>
<dbReference type="Gene3D" id="3.40.640.10">
    <property type="entry name" value="Type I PLP-dependent aspartate aminotransferase-like (Major domain)"/>
    <property type="match status" value="1"/>
</dbReference>
<dbReference type="HAMAP" id="MF_00375">
    <property type="entry name" value="HemL_aminotrans_3"/>
    <property type="match status" value="1"/>
</dbReference>
<dbReference type="InterPro" id="IPR004639">
    <property type="entry name" value="4pyrrol_synth_GluAld_NH2Trfase"/>
</dbReference>
<dbReference type="InterPro" id="IPR005814">
    <property type="entry name" value="Aminotrans_3"/>
</dbReference>
<dbReference type="InterPro" id="IPR049704">
    <property type="entry name" value="Aminotrans_3_PPA_site"/>
</dbReference>
<dbReference type="InterPro" id="IPR015424">
    <property type="entry name" value="PyrdxlP-dep_Trfase"/>
</dbReference>
<dbReference type="InterPro" id="IPR015421">
    <property type="entry name" value="PyrdxlP-dep_Trfase_major"/>
</dbReference>
<dbReference type="InterPro" id="IPR015422">
    <property type="entry name" value="PyrdxlP-dep_Trfase_small"/>
</dbReference>
<dbReference type="NCBIfam" id="TIGR00713">
    <property type="entry name" value="hemL"/>
    <property type="match status" value="1"/>
</dbReference>
<dbReference type="NCBIfam" id="NF000818">
    <property type="entry name" value="PRK00062.1"/>
    <property type="match status" value="1"/>
</dbReference>
<dbReference type="PANTHER" id="PTHR43713">
    <property type="entry name" value="GLUTAMATE-1-SEMIALDEHYDE 2,1-AMINOMUTASE"/>
    <property type="match status" value="1"/>
</dbReference>
<dbReference type="PANTHER" id="PTHR43713:SF3">
    <property type="entry name" value="GLUTAMATE-1-SEMIALDEHYDE 2,1-AMINOMUTASE 1, CHLOROPLASTIC-RELATED"/>
    <property type="match status" value="1"/>
</dbReference>
<dbReference type="Pfam" id="PF00202">
    <property type="entry name" value="Aminotran_3"/>
    <property type="match status" value="1"/>
</dbReference>
<dbReference type="SUPFAM" id="SSF53383">
    <property type="entry name" value="PLP-dependent transferases"/>
    <property type="match status" value="1"/>
</dbReference>
<dbReference type="PROSITE" id="PS00600">
    <property type="entry name" value="AA_TRANSFER_CLASS_3"/>
    <property type="match status" value="1"/>
</dbReference>
<proteinExistence type="inferred from homology"/>
<evidence type="ECO:0000255" key="1">
    <source>
        <dbReference type="HAMAP-Rule" id="MF_00375"/>
    </source>
</evidence>
<accession>A9M1G6</accession>
<gene>
    <name evidence="1" type="primary">hemL</name>
    <name type="ordered locus">NMCC_0357</name>
</gene>
<name>GSA_NEIM0</name>
<feature type="chain" id="PRO_1000079926" description="Glutamate-1-semialdehyde 2,1-aminomutase">
    <location>
        <begin position="1"/>
        <end position="427"/>
    </location>
</feature>
<feature type="modified residue" description="N6-(pyridoxal phosphate)lysine" evidence="1">
    <location>
        <position position="265"/>
    </location>
</feature>
<reference key="1">
    <citation type="journal article" date="2008" name="Genomics">
        <title>Characterization of ST-4821 complex, a unique Neisseria meningitidis clone.</title>
        <authorList>
            <person name="Peng J."/>
            <person name="Yang L."/>
            <person name="Yang F."/>
            <person name="Yang J."/>
            <person name="Yan Y."/>
            <person name="Nie H."/>
            <person name="Zhang X."/>
            <person name="Xiong Z."/>
            <person name="Jiang Y."/>
            <person name="Cheng F."/>
            <person name="Xu X."/>
            <person name="Chen S."/>
            <person name="Sun L."/>
            <person name="Li W."/>
            <person name="Shen Y."/>
            <person name="Shao Z."/>
            <person name="Liang X."/>
            <person name="Xu J."/>
            <person name="Jin Q."/>
        </authorList>
    </citation>
    <scope>NUCLEOTIDE SEQUENCE [LARGE SCALE GENOMIC DNA]</scope>
    <source>
        <strain>053442</strain>
    </source>
</reference>
<comment type="catalytic activity">
    <reaction evidence="1">
        <text>(S)-4-amino-5-oxopentanoate = 5-aminolevulinate</text>
        <dbReference type="Rhea" id="RHEA:14265"/>
        <dbReference type="ChEBI" id="CHEBI:57501"/>
        <dbReference type="ChEBI" id="CHEBI:356416"/>
        <dbReference type="EC" id="5.4.3.8"/>
    </reaction>
</comment>
<comment type="cofactor">
    <cofactor evidence="1">
        <name>pyridoxal 5'-phosphate</name>
        <dbReference type="ChEBI" id="CHEBI:597326"/>
    </cofactor>
</comment>
<comment type="pathway">
    <text evidence="1">Porphyrin-containing compound metabolism; protoporphyrin-IX biosynthesis; 5-aminolevulinate from L-glutamyl-tRNA(Glu): step 2/2.</text>
</comment>
<comment type="subunit">
    <text evidence="1">Homodimer.</text>
</comment>
<comment type="subcellular location">
    <subcellularLocation>
        <location evidence="1">Cytoplasm</location>
    </subcellularLocation>
</comment>
<comment type="similarity">
    <text evidence="1">Belongs to the class-III pyridoxal-phosphate-dependent aminotransferase family. HemL subfamily.</text>
</comment>
<protein>
    <recommendedName>
        <fullName evidence="1">Glutamate-1-semialdehyde 2,1-aminomutase</fullName>
        <shortName evidence="1">GSA</shortName>
        <ecNumber evidence="1">5.4.3.8</ecNumber>
    </recommendedName>
    <alternativeName>
        <fullName evidence="1">Glutamate-1-semialdehyde aminotransferase</fullName>
        <shortName evidence="1">GSA-AT</shortName>
    </alternativeName>
</protein>
<keyword id="KW-0963">Cytoplasm</keyword>
<keyword id="KW-0413">Isomerase</keyword>
<keyword id="KW-0627">Porphyrin biosynthesis</keyword>
<keyword id="KW-0663">Pyridoxal phosphate</keyword>
<sequence>MNRNEILFDRAKAIIPGGVNSPVRAFGSVGGVPRFIKKAEGAYVWDENGTRYTDYVGSWGPAIVGHAHPEVVEAVREAALGGLSFGAPTEGEIAIAEQIAKIMPSVERLRLVSSGTEATMTAIRLARGFTGRDKIIKFEGCYHGHSDSLLVKAGSGLLTFGNPSSAGVPADFTKHTLVLEYNNIAQLEEAFAQSGNDIACVILEPFVGNMNLVRPTEAFVKALRELTEKHGAVLIYDEVMTGFRVALGGAQSLHGIMPDLTTMGKVIGGGMPLAAFGGRKDIMECISPLGGVYQAGTLSGNPIAVAAGLKTLEIIRREGFYENLTARTEQLVQGFRTAADAAGIEFTADSVGGMFGLYFAAHAPRNYADMARSNIDAFKRFFHGMLDRGIAFGPSAYEAGFVSAAHTPELIDETVAVAVEVFKAMAA</sequence>